<name>ACPH_ECOSE</name>
<dbReference type="EC" id="3.1.4.14" evidence="1"/>
<dbReference type="EMBL" id="AP009240">
    <property type="protein sequence ID" value="BAG75949.1"/>
    <property type="molecule type" value="Genomic_DNA"/>
</dbReference>
<dbReference type="RefSeq" id="WP_001009884.1">
    <property type="nucleotide sequence ID" value="NC_011415.1"/>
</dbReference>
<dbReference type="SMR" id="B6HZK4"/>
<dbReference type="GeneID" id="93777056"/>
<dbReference type="KEGG" id="ecy:ECSE_0425"/>
<dbReference type="HOGENOM" id="CLU_099370_1_0_6"/>
<dbReference type="Proteomes" id="UP000008199">
    <property type="component" value="Chromosome"/>
</dbReference>
<dbReference type="GO" id="GO:0008770">
    <property type="term" value="F:[acyl-carrier-protein] phosphodiesterase activity"/>
    <property type="evidence" value="ECO:0007669"/>
    <property type="project" value="UniProtKB-UniRule"/>
</dbReference>
<dbReference type="GO" id="GO:0006633">
    <property type="term" value="P:fatty acid biosynthetic process"/>
    <property type="evidence" value="ECO:0007669"/>
    <property type="project" value="UniProtKB-UniRule"/>
</dbReference>
<dbReference type="HAMAP" id="MF_01950">
    <property type="entry name" value="AcpH"/>
    <property type="match status" value="1"/>
</dbReference>
<dbReference type="InterPro" id="IPR007431">
    <property type="entry name" value="ACP_PD"/>
</dbReference>
<dbReference type="InterPro" id="IPR023491">
    <property type="entry name" value="ACP_phosphodiesterase_gpbac"/>
</dbReference>
<dbReference type="NCBIfam" id="NF007466">
    <property type="entry name" value="PRK10045.1"/>
    <property type="match status" value="1"/>
</dbReference>
<dbReference type="PANTHER" id="PTHR38764">
    <property type="entry name" value="ACYL CARRIER PROTEIN PHOSPHODIESTERASE"/>
    <property type="match status" value="1"/>
</dbReference>
<dbReference type="PANTHER" id="PTHR38764:SF1">
    <property type="entry name" value="ACYL CARRIER PROTEIN PHOSPHODIESTERASE"/>
    <property type="match status" value="1"/>
</dbReference>
<dbReference type="Pfam" id="PF04336">
    <property type="entry name" value="ACP_PD"/>
    <property type="match status" value="1"/>
</dbReference>
<dbReference type="PIRSF" id="PIRSF011489">
    <property type="entry name" value="DUF479"/>
    <property type="match status" value="1"/>
</dbReference>
<gene>
    <name evidence="1" type="primary">acpH</name>
    <name type="ordered locus">ECSE_0425</name>
</gene>
<reference key="1">
    <citation type="journal article" date="2008" name="DNA Res.">
        <title>Complete genome sequence and comparative analysis of the wild-type commensal Escherichia coli strain SE11 isolated from a healthy adult.</title>
        <authorList>
            <person name="Oshima K."/>
            <person name="Toh H."/>
            <person name="Ogura Y."/>
            <person name="Sasamoto H."/>
            <person name="Morita H."/>
            <person name="Park S.-H."/>
            <person name="Ooka T."/>
            <person name="Iyoda S."/>
            <person name="Taylor T.D."/>
            <person name="Hayashi T."/>
            <person name="Itoh K."/>
            <person name="Hattori M."/>
        </authorList>
    </citation>
    <scope>NUCLEOTIDE SEQUENCE [LARGE SCALE GENOMIC DNA]</scope>
    <source>
        <strain>SE11</strain>
    </source>
</reference>
<protein>
    <recommendedName>
        <fullName evidence="1">Acyl carrier protein phosphodiesterase</fullName>
        <shortName evidence="1">ACP phosphodiesterase</shortName>
        <ecNumber evidence="1">3.1.4.14</ecNumber>
    </recommendedName>
</protein>
<accession>B6HZK4</accession>
<keyword id="KW-0275">Fatty acid biosynthesis</keyword>
<keyword id="KW-0276">Fatty acid metabolism</keyword>
<keyword id="KW-0378">Hydrolase</keyword>
<keyword id="KW-0444">Lipid biosynthesis</keyword>
<keyword id="KW-0443">Lipid metabolism</keyword>
<feature type="chain" id="PRO_1000188806" description="Acyl carrier protein phosphodiesterase">
    <location>
        <begin position="1"/>
        <end position="193"/>
    </location>
</feature>
<proteinExistence type="inferred from homology"/>
<organism>
    <name type="scientific">Escherichia coli (strain SE11)</name>
    <dbReference type="NCBI Taxonomy" id="409438"/>
    <lineage>
        <taxon>Bacteria</taxon>
        <taxon>Pseudomonadati</taxon>
        <taxon>Pseudomonadota</taxon>
        <taxon>Gammaproteobacteria</taxon>
        <taxon>Enterobacterales</taxon>
        <taxon>Enterobacteriaceae</taxon>
        <taxon>Escherichia</taxon>
    </lineage>
</organism>
<comment type="function">
    <text evidence="1">Converts holo-ACP to apo-ACP by hydrolytic cleavage of the phosphopantetheine prosthetic group from ACP.</text>
</comment>
<comment type="catalytic activity">
    <reaction evidence="1">
        <text>holo-[ACP] + H2O = apo-[ACP] + (R)-4'-phosphopantetheine + H(+)</text>
        <dbReference type="Rhea" id="RHEA:20537"/>
        <dbReference type="Rhea" id="RHEA-COMP:9685"/>
        <dbReference type="Rhea" id="RHEA-COMP:9690"/>
        <dbReference type="ChEBI" id="CHEBI:15377"/>
        <dbReference type="ChEBI" id="CHEBI:15378"/>
        <dbReference type="ChEBI" id="CHEBI:29999"/>
        <dbReference type="ChEBI" id="CHEBI:61723"/>
        <dbReference type="ChEBI" id="CHEBI:64479"/>
        <dbReference type="EC" id="3.1.4.14"/>
    </reaction>
</comment>
<comment type="similarity">
    <text evidence="1">Belongs to the AcpH family.</text>
</comment>
<evidence type="ECO:0000255" key="1">
    <source>
        <dbReference type="HAMAP-Rule" id="MF_01950"/>
    </source>
</evidence>
<sequence>MNFLAHLHLAHLAESSLSGNLLADFVRGNPEESFPPDVVAGIHMHRRIDVLTDNLPEVREAREWFRSETRRVAPITLDVMWDHFLSRHWSQLSPDFPLQEFVCYAREQVMTILPDSPPRFINLNNYLWSEQWLVRYRDMDFIQNVLNGMASRRPRLDALRDSWYDLDAHYDALETRFWQFYPRMMAQASHKAL</sequence>